<accession>A8FVT2</accession>
<sequence>MTESLWHERRLTEEKKRRNDHRSPYQRDRARILHSAAFRRLQAKTQVLGVGMNDFYRTRLTHSLEVSQIGTGIRAQLKQKRPEFDHLFDSMSLIESLCLAHDIGHPPFGHGGEVALNYMMRDHGGFEGNGQTFRILTGLEPYTEYYGMNLCRRTLLGILKYPAPYSSLYRASGNKPVNNIRQLKPSQWTPVKGIFDDDSGILDWVLEPLNGSDRERFLSHRDLGANKHLRTQFKSLDCSVMELADDIAYAVHDLEDAIVMGIVTPSQWQQDVASKLTLSHDAWIKEEFTNIGQNLFSHQHHLRKDAIGTLVNGFVTAIDIVEDRAFTDPLLRFNAGLDTSFSEALEVLKQFVYKYVIRKPEIQMLEYKGQQIVMELFEAFESDPERLLPTHTQERWRESHTKGLNSHRVIADYISGMTDEFAARLHQHLFNPKAGSMIELNGEL</sequence>
<protein>
    <recommendedName>
        <fullName evidence="1">Deoxyguanosinetriphosphate triphosphohydrolase-like protein</fullName>
    </recommendedName>
</protein>
<organism>
    <name type="scientific">Shewanella sediminis (strain HAW-EB3)</name>
    <dbReference type="NCBI Taxonomy" id="425104"/>
    <lineage>
        <taxon>Bacteria</taxon>
        <taxon>Pseudomonadati</taxon>
        <taxon>Pseudomonadota</taxon>
        <taxon>Gammaproteobacteria</taxon>
        <taxon>Alteromonadales</taxon>
        <taxon>Shewanellaceae</taxon>
        <taxon>Shewanella</taxon>
    </lineage>
</organism>
<feature type="chain" id="PRO_1000138932" description="Deoxyguanosinetriphosphate triphosphohydrolase-like protein">
    <location>
        <begin position="1"/>
        <end position="444"/>
    </location>
</feature>
<feature type="domain" description="HD" evidence="2">
    <location>
        <begin position="59"/>
        <end position="250"/>
    </location>
</feature>
<feature type="region of interest" description="Disordered" evidence="3">
    <location>
        <begin position="1"/>
        <end position="26"/>
    </location>
</feature>
<proteinExistence type="inferred from homology"/>
<evidence type="ECO:0000255" key="1">
    <source>
        <dbReference type="HAMAP-Rule" id="MF_01212"/>
    </source>
</evidence>
<evidence type="ECO:0000255" key="2">
    <source>
        <dbReference type="PROSITE-ProRule" id="PRU01175"/>
    </source>
</evidence>
<evidence type="ECO:0000256" key="3">
    <source>
        <dbReference type="SAM" id="MobiDB-lite"/>
    </source>
</evidence>
<name>DGTL1_SHESH</name>
<comment type="similarity">
    <text evidence="1">Belongs to the dGTPase family. Type 2 subfamily.</text>
</comment>
<gene>
    <name type="ordered locus">Ssed_2346</name>
</gene>
<reference key="1">
    <citation type="submission" date="2007-08" db="EMBL/GenBank/DDBJ databases">
        <title>Complete sequence of Shewanella sediminis HAW-EB3.</title>
        <authorList>
            <consortium name="US DOE Joint Genome Institute"/>
            <person name="Copeland A."/>
            <person name="Lucas S."/>
            <person name="Lapidus A."/>
            <person name="Barry K."/>
            <person name="Glavina del Rio T."/>
            <person name="Dalin E."/>
            <person name="Tice H."/>
            <person name="Pitluck S."/>
            <person name="Chertkov O."/>
            <person name="Brettin T."/>
            <person name="Bruce D."/>
            <person name="Detter J.C."/>
            <person name="Han C."/>
            <person name="Schmutz J."/>
            <person name="Larimer F."/>
            <person name="Land M."/>
            <person name="Hauser L."/>
            <person name="Kyrpides N."/>
            <person name="Kim E."/>
            <person name="Zhao J.-S."/>
            <person name="Richardson P."/>
        </authorList>
    </citation>
    <scope>NUCLEOTIDE SEQUENCE [LARGE SCALE GENOMIC DNA]</scope>
    <source>
        <strain>HAW-EB3</strain>
    </source>
</reference>
<keyword id="KW-0378">Hydrolase</keyword>
<keyword id="KW-1185">Reference proteome</keyword>
<dbReference type="EMBL" id="CP000821">
    <property type="protein sequence ID" value="ABV36955.1"/>
    <property type="molecule type" value="Genomic_DNA"/>
</dbReference>
<dbReference type="RefSeq" id="WP_012142690.1">
    <property type="nucleotide sequence ID" value="NC_009831.1"/>
</dbReference>
<dbReference type="SMR" id="A8FVT2"/>
<dbReference type="STRING" id="425104.Ssed_2346"/>
<dbReference type="KEGG" id="sse:Ssed_2346"/>
<dbReference type="eggNOG" id="COG0232">
    <property type="taxonomic scope" value="Bacteria"/>
</dbReference>
<dbReference type="HOGENOM" id="CLU_028163_0_0_6"/>
<dbReference type="OrthoDB" id="9803619at2"/>
<dbReference type="Proteomes" id="UP000002015">
    <property type="component" value="Chromosome"/>
</dbReference>
<dbReference type="GO" id="GO:0008832">
    <property type="term" value="F:dGTPase activity"/>
    <property type="evidence" value="ECO:0007669"/>
    <property type="project" value="TreeGrafter"/>
</dbReference>
<dbReference type="GO" id="GO:0006203">
    <property type="term" value="P:dGTP catabolic process"/>
    <property type="evidence" value="ECO:0007669"/>
    <property type="project" value="TreeGrafter"/>
</dbReference>
<dbReference type="CDD" id="cd00077">
    <property type="entry name" value="HDc"/>
    <property type="match status" value="1"/>
</dbReference>
<dbReference type="Gene3D" id="1.10.3210.10">
    <property type="entry name" value="Hypothetical protein af1432"/>
    <property type="match status" value="1"/>
</dbReference>
<dbReference type="HAMAP" id="MF_01212">
    <property type="entry name" value="dGTPase_type2"/>
    <property type="match status" value="1"/>
</dbReference>
<dbReference type="InterPro" id="IPR006261">
    <property type="entry name" value="dGTPase"/>
</dbReference>
<dbReference type="InterPro" id="IPR050135">
    <property type="entry name" value="dGTPase-like"/>
</dbReference>
<dbReference type="InterPro" id="IPR023023">
    <property type="entry name" value="dNTPase_2"/>
</dbReference>
<dbReference type="InterPro" id="IPR003607">
    <property type="entry name" value="HD/PDEase_dom"/>
</dbReference>
<dbReference type="InterPro" id="IPR006674">
    <property type="entry name" value="HD_domain"/>
</dbReference>
<dbReference type="InterPro" id="IPR026875">
    <property type="entry name" value="PHydrolase_assoc_dom"/>
</dbReference>
<dbReference type="NCBIfam" id="NF041026">
    <property type="entry name" value="antiphage_dGTPase"/>
    <property type="match status" value="1"/>
</dbReference>
<dbReference type="NCBIfam" id="TIGR01353">
    <property type="entry name" value="dGTP_triPase"/>
    <property type="match status" value="1"/>
</dbReference>
<dbReference type="NCBIfam" id="NF003701">
    <property type="entry name" value="PRK05318.1"/>
    <property type="match status" value="1"/>
</dbReference>
<dbReference type="PANTHER" id="PTHR11373:SF40">
    <property type="entry name" value="DEOXYGUANOSINETRIPHOSPHATE TRIPHOSPHOHYDROLASE-LIKE PROTEIN 2"/>
    <property type="match status" value="1"/>
</dbReference>
<dbReference type="PANTHER" id="PTHR11373">
    <property type="entry name" value="DEOXYNUCLEOSIDE TRIPHOSPHATE TRIPHOSPHOHYDROLASE"/>
    <property type="match status" value="1"/>
</dbReference>
<dbReference type="Pfam" id="PF01966">
    <property type="entry name" value="HD"/>
    <property type="match status" value="1"/>
</dbReference>
<dbReference type="Pfam" id="PF13286">
    <property type="entry name" value="HD_assoc"/>
    <property type="match status" value="1"/>
</dbReference>
<dbReference type="SMART" id="SM00471">
    <property type="entry name" value="HDc"/>
    <property type="match status" value="1"/>
</dbReference>
<dbReference type="SUPFAM" id="SSF109604">
    <property type="entry name" value="HD-domain/PDEase-like"/>
    <property type="match status" value="1"/>
</dbReference>
<dbReference type="PROSITE" id="PS51831">
    <property type="entry name" value="HD"/>
    <property type="match status" value="1"/>
</dbReference>